<gene>
    <name type="primary">ENOSF1</name>
</gene>
<sequence length="443" mass="49621">MVHGRVSRLSVHDVRFPTSLGGHGSDAMHTDPDYSAAYVVLETDAEDGLKGYGITFTLGRGTEVVVCAVNALAPHVLNKDLGEIVGDFRGFYRQLTSDGQLRWIGPEKGVVHLATAAVLNAVWDLWAKQEGKPLWKLLVDMDPRTLVSCIDFRYITDVLTEEEACEILRQSQVGKKEREEQMLAHGYPAYTTSCAWLGYPDATLKQLCSEALKDGWTRFKVKVGADLQDDIRRCRLVRNMIGPEKTLMMDANQRWDVPEAVEWMTKLAEFKPLWIEEPTSPDDILGHAAISKALAPLGIGVATGEQCHNRVIFKQLLQAKALKFLQIDSCRLGSVNENLSVLLMAKKFEIPVCPHAGGVGLCELVQHLIIFDFISVSASLQDRMCEYVDHLHEHFKYPVLIREAAYMPPKDAGYSTEMKEDSVKRHRYPDGEVWKKLLSAQGN</sequence>
<evidence type="ECO:0000250" key="1">
    <source>
        <dbReference type="UniProtKB" id="Q7L5Y1"/>
    </source>
</evidence>
<evidence type="ECO:0000250" key="2">
    <source>
        <dbReference type="UniProtKB" id="Q8P3K2"/>
    </source>
</evidence>
<evidence type="ECO:0000255" key="3"/>
<evidence type="ECO:0000305" key="4"/>
<feature type="chain" id="PRO_0000331651" description="Mitochondrial enolase superfamily member 1">
    <location>
        <begin position="1"/>
        <end position="443"/>
    </location>
</feature>
<feature type="active site" description="Proton donor/acceptor" evidence="2">
    <location>
        <position position="222"/>
    </location>
</feature>
<feature type="active site" evidence="3">
    <location>
        <position position="355"/>
    </location>
</feature>
<feature type="binding site" evidence="2">
    <location>
        <begin position="24"/>
        <end position="26"/>
    </location>
    <ligand>
        <name>substrate</name>
    </ligand>
</feature>
<feature type="binding site" evidence="2">
    <location>
        <position position="34"/>
    </location>
    <ligand>
        <name>substrate</name>
    </ligand>
</feature>
<feature type="binding site" evidence="2">
    <location>
        <position position="220"/>
    </location>
    <ligand>
        <name>substrate</name>
    </ligand>
</feature>
<feature type="binding site" evidence="1">
    <location>
        <position position="250"/>
    </location>
    <ligand>
        <name>Mg(2+)</name>
        <dbReference type="ChEBI" id="CHEBI:18420"/>
    </ligand>
</feature>
<feature type="binding site" evidence="2">
    <location>
        <position position="252"/>
    </location>
    <ligand>
        <name>substrate</name>
    </ligand>
</feature>
<feature type="binding site" evidence="1">
    <location>
        <position position="276"/>
    </location>
    <ligand>
        <name>Mg(2+)</name>
        <dbReference type="ChEBI" id="CHEBI:18420"/>
    </ligand>
</feature>
<feature type="binding site" evidence="2">
    <location>
        <position position="276"/>
    </location>
    <ligand>
        <name>substrate</name>
    </ligand>
</feature>
<feature type="binding site" evidence="1">
    <location>
        <position position="305"/>
    </location>
    <ligand>
        <name>Mg(2+)</name>
        <dbReference type="ChEBI" id="CHEBI:18420"/>
    </ligand>
</feature>
<feature type="binding site" evidence="2">
    <location>
        <position position="305"/>
    </location>
    <ligand>
        <name>substrate</name>
    </ligand>
</feature>
<feature type="binding site" evidence="2">
    <location>
        <begin position="355"/>
        <end position="357"/>
    </location>
    <ligand>
        <name>substrate</name>
    </ligand>
</feature>
<feature type="binding site" evidence="2">
    <location>
        <position position="386"/>
    </location>
    <ligand>
        <name>substrate</name>
    </ligand>
</feature>
<feature type="modified residue" description="Phosphoserine" evidence="1">
    <location>
        <position position="148"/>
    </location>
</feature>
<reference key="1">
    <citation type="submission" date="2006-01" db="EMBL/GenBank/DDBJ databases">
        <authorList>
            <consortium name="NIH - Mammalian Gene Collection (MGC) project"/>
        </authorList>
    </citation>
    <scope>NUCLEOTIDE SEQUENCE [LARGE SCALE MRNA]</scope>
    <source>
        <strain>Hereford</strain>
        <tissue>Hypothalamus</tissue>
    </source>
</reference>
<organism>
    <name type="scientific">Bos taurus</name>
    <name type="common">Bovine</name>
    <dbReference type="NCBI Taxonomy" id="9913"/>
    <lineage>
        <taxon>Eukaryota</taxon>
        <taxon>Metazoa</taxon>
        <taxon>Chordata</taxon>
        <taxon>Craniata</taxon>
        <taxon>Vertebrata</taxon>
        <taxon>Euteleostomi</taxon>
        <taxon>Mammalia</taxon>
        <taxon>Eutheria</taxon>
        <taxon>Laurasiatheria</taxon>
        <taxon>Artiodactyla</taxon>
        <taxon>Ruminantia</taxon>
        <taxon>Pecora</taxon>
        <taxon>Bovidae</taxon>
        <taxon>Bovinae</taxon>
        <taxon>Bos</taxon>
    </lineage>
</organism>
<comment type="function">
    <text evidence="1">Plays a role in the catabolism of L-fucose, a sugar that is part of the carbohydrates that are attached to cellular glycoproteins. Catalyzes the dehydration of L-fuconate to 2-keto-3-deoxy-L-fuconate by the abstraction of the 2-proton to generate an enediolate intermediate that is stabilized by the magnesium ion. May down-regulate thymidylate synthase activity, possibly already at the RNA level, by promoting the degradation of TYMS mRNA via an antisense RNA-based mechanism.</text>
</comment>
<comment type="catalytic activity">
    <reaction evidence="1">
        <text>L-fuconate = 2-dehydro-3-deoxy-L-fuconate + H2O</text>
        <dbReference type="Rhea" id="RHEA:22772"/>
        <dbReference type="ChEBI" id="CHEBI:15377"/>
        <dbReference type="ChEBI" id="CHEBI:21291"/>
        <dbReference type="ChEBI" id="CHEBI:37448"/>
        <dbReference type="EC" id="4.2.1.68"/>
    </reaction>
</comment>
<comment type="cofactor">
    <cofactor evidence="1">
        <name>Mg(2+)</name>
        <dbReference type="ChEBI" id="CHEBI:18420"/>
    </cofactor>
    <text evidence="1">Binds 1 Mg(2+) ion per subunit.</text>
</comment>
<comment type="subcellular location">
    <subcellularLocation>
        <location evidence="1">Mitochondrion</location>
    </subcellularLocation>
</comment>
<comment type="PTM">
    <text evidence="1">Could be sumoylated.</text>
</comment>
<comment type="similarity">
    <text evidence="4">Belongs to the mandelate racemase/muconate lactonizing enzyme family. ENOSF1 subfamily.</text>
</comment>
<dbReference type="EC" id="4.2.1.68" evidence="1"/>
<dbReference type="EMBL" id="BC112706">
    <property type="protein sequence ID" value="AAI12707.1"/>
    <property type="molecule type" value="mRNA"/>
</dbReference>
<dbReference type="RefSeq" id="NP_001040015.1">
    <property type="nucleotide sequence ID" value="NM_001046550.2"/>
</dbReference>
<dbReference type="SMR" id="Q2KIA9"/>
<dbReference type="FunCoup" id="Q2KIA9">
    <property type="interactions" value="81"/>
</dbReference>
<dbReference type="STRING" id="9913.ENSBTAP00000056727"/>
<dbReference type="PaxDb" id="9913-ENSBTAP00000031013"/>
<dbReference type="Ensembl" id="ENSBTAT00000076666.2">
    <property type="protein sequence ID" value="ENSBTAP00000056727.1"/>
    <property type="gene ID" value="ENSBTAG00000007000.7"/>
</dbReference>
<dbReference type="GeneID" id="615106"/>
<dbReference type="KEGG" id="bta:615106"/>
<dbReference type="CTD" id="55556"/>
<dbReference type="VEuPathDB" id="HostDB:ENSBTAG00000007000"/>
<dbReference type="VGNC" id="VGNC:28501">
    <property type="gene designation" value="ENOSF1"/>
</dbReference>
<dbReference type="eggNOG" id="ENOG502QU7C">
    <property type="taxonomic scope" value="Eukaryota"/>
</dbReference>
<dbReference type="GeneTree" id="ENSGT00390000014290"/>
<dbReference type="HOGENOM" id="CLU_030273_2_0_1"/>
<dbReference type="InParanoid" id="Q2KIA9"/>
<dbReference type="OMA" id="SGAIDVC"/>
<dbReference type="OrthoDB" id="14161at2759"/>
<dbReference type="TreeFam" id="TF300529"/>
<dbReference type="Proteomes" id="UP000009136">
    <property type="component" value="Chromosome 24"/>
</dbReference>
<dbReference type="Bgee" id="ENSBTAG00000007000">
    <property type="expression patterns" value="Expressed in cortex of kidney and 106 other cell types or tissues"/>
</dbReference>
<dbReference type="GO" id="GO:0005739">
    <property type="term" value="C:mitochondrion"/>
    <property type="evidence" value="ECO:0007669"/>
    <property type="project" value="UniProtKB-SubCell"/>
</dbReference>
<dbReference type="GO" id="GO:0016836">
    <property type="term" value="F:hydro-lyase activity"/>
    <property type="evidence" value="ECO:0000318"/>
    <property type="project" value="GO_Central"/>
</dbReference>
<dbReference type="GO" id="GO:0016853">
    <property type="term" value="F:isomerase activity"/>
    <property type="evidence" value="ECO:0007669"/>
    <property type="project" value="UniProtKB-KW"/>
</dbReference>
<dbReference type="GO" id="GO:0050023">
    <property type="term" value="F:L-fuconate dehydratase activity"/>
    <property type="evidence" value="ECO:0000250"/>
    <property type="project" value="UniProtKB"/>
</dbReference>
<dbReference type="GO" id="GO:0000287">
    <property type="term" value="F:magnesium ion binding"/>
    <property type="evidence" value="ECO:0000250"/>
    <property type="project" value="UniProtKB"/>
</dbReference>
<dbReference type="GO" id="GO:0009063">
    <property type="term" value="P:amino acid catabolic process"/>
    <property type="evidence" value="ECO:0007669"/>
    <property type="project" value="InterPro"/>
</dbReference>
<dbReference type="GO" id="GO:0016052">
    <property type="term" value="P:carbohydrate catabolic process"/>
    <property type="evidence" value="ECO:0000250"/>
    <property type="project" value="UniProtKB"/>
</dbReference>
<dbReference type="CDD" id="cd03324">
    <property type="entry name" value="rTSbeta_L-fuconate_dehydratase"/>
    <property type="match status" value="1"/>
</dbReference>
<dbReference type="FunFam" id="3.20.20.120:FF:000007">
    <property type="entry name" value="Mitochondrial enolase superfamily member 1"/>
    <property type="match status" value="1"/>
</dbReference>
<dbReference type="FunFam" id="3.30.390.10:FF:000006">
    <property type="entry name" value="Mitochondrial enolase superfamily member 1"/>
    <property type="match status" value="1"/>
</dbReference>
<dbReference type="Gene3D" id="3.20.20.120">
    <property type="entry name" value="Enolase-like C-terminal domain"/>
    <property type="match status" value="1"/>
</dbReference>
<dbReference type="Gene3D" id="3.30.390.10">
    <property type="entry name" value="Enolase-like, N-terminal domain"/>
    <property type="match status" value="1"/>
</dbReference>
<dbReference type="InterPro" id="IPR036849">
    <property type="entry name" value="Enolase-like_C_sf"/>
</dbReference>
<dbReference type="InterPro" id="IPR029017">
    <property type="entry name" value="Enolase-like_N"/>
</dbReference>
<dbReference type="InterPro" id="IPR029065">
    <property type="entry name" value="Enolase_C-like"/>
</dbReference>
<dbReference type="InterPro" id="IPR034610">
    <property type="entry name" value="L-fuconate_dehydratase"/>
</dbReference>
<dbReference type="InterPro" id="IPR018110">
    <property type="entry name" value="Mandel_Rmase/mucon_lact_enz_CS"/>
</dbReference>
<dbReference type="InterPro" id="IPR013342">
    <property type="entry name" value="Mandelate_racemase_C"/>
</dbReference>
<dbReference type="InterPro" id="IPR013341">
    <property type="entry name" value="Mandelate_racemase_N_dom"/>
</dbReference>
<dbReference type="InterPro" id="IPR046945">
    <property type="entry name" value="RHMD-like"/>
</dbReference>
<dbReference type="PANTHER" id="PTHR13794">
    <property type="entry name" value="ENOLASE SUPERFAMILY, MANDELATE RACEMASE"/>
    <property type="match status" value="1"/>
</dbReference>
<dbReference type="PANTHER" id="PTHR13794:SF58">
    <property type="entry name" value="MITOCHONDRIAL ENOLASE SUPERFAMILY MEMBER 1"/>
    <property type="match status" value="1"/>
</dbReference>
<dbReference type="Pfam" id="PF13378">
    <property type="entry name" value="MR_MLE_C"/>
    <property type="match status" value="1"/>
</dbReference>
<dbReference type="Pfam" id="PF02746">
    <property type="entry name" value="MR_MLE_N"/>
    <property type="match status" value="1"/>
</dbReference>
<dbReference type="SFLD" id="SFLDS00001">
    <property type="entry name" value="Enolase"/>
    <property type="match status" value="1"/>
</dbReference>
<dbReference type="SFLD" id="SFLDF00111">
    <property type="entry name" value="L-fuconate_dehydratase"/>
    <property type="match status" value="1"/>
</dbReference>
<dbReference type="SMART" id="SM00922">
    <property type="entry name" value="MR_MLE"/>
    <property type="match status" value="1"/>
</dbReference>
<dbReference type="SUPFAM" id="SSF51604">
    <property type="entry name" value="Enolase C-terminal domain-like"/>
    <property type="match status" value="1"/>
</dbReference>
<dbReference type="SUPFAM" id="SSF54826">
    <property type="entry name" value="Enolase N-terminal domain-like"/>
    <property type="match status" value="1"/>
</dbReference>
<dbReference type="PROSITE" id="PS00909">
    <property type="entry name" value="MR_MLE_2"/>
    <property type="match status" value="1"/>
</dbReference>
<proteinExistence type="evidence at transcript level"/>
<name>ENOF1_BOVIN</name>
<keyword id="KW-0413">Isomerase</keyword>
<keyword id="KW-0456">Lyase</keyword>
<keyword id="KW-0460">Magnesium</keyword>
<keyword id="KW-0479">Metal-binding</keyword>
<keyword id="KW-0496">Mitochondrion</keyword>
<keyword id="KW-0597">Phosphoprotein</keyword>
<keyword id="KW-1185">Reference proteome</keyword>
<keyword id="KW-0832">Ubl conjugation</keyword>
<protein>
    <recommendedName>
        <fullName>Mitochondrial enolase superfamily member 1</fullName>
        <ecNumber evidence="1">4.2.1.68</ecNumber>
    </recommendedName>
    <alternativeName>
        <fullName>L-fuconate dehydratase</fullName>
    </alternativeName>
</protein>
<accession>Q2KIA9</accession>